<organism>
    <name type="scientific">Haemophilus influenzae (strain ATCC 51907 / DSM 11121 / KW20 / Rd)</name>
    <dbReference type="NCBI Taxonomy" id="71421"/>
    <lineage>
        <taxon>Bacteria</taxon>
        <taxon>Pseudomonadati</taxon>
        <taxon>Pseudomonadota</taxon>
        <taxon>Gammaproteobacteria</taxon>
        <taxon>Pasteurellales</taxon>
        <taxon>Pasteurellaceae</taxon>
        <taxon>Haemophilus</taxon>
    </lineage>
</organism>
<sequence>MIKGIQITQAANDNLLNSFWLLDSEKNEARCLCAKGEFAEDQVVAVSELGQIEYRELPVNVAPTVKVEGGQHLNVNVLRRETLEDAVNNPDKYPQLTIRVSGYAVRFNSLTPEQQRDVITRTFTESL</sequence>
<dbReference type="EMBL" id="L42023">
    <property type="protein sequence ID" value="AAC21695.1"/>
    <property type="molecule type" value="Genomic_DNA"/>
</dbReference>
<dbReference type="PIR" id="C64140">
    <property type="entry name" value="C64140"/>
</dbReference>
<dbReference type="RefSeq" id="NP_438190.1">
    <property type="nucleotide sequence ID" value="NC_000907.1"/>
</dbReference>
<dbReference type="SMR" id="P44455"/>
<dbReference type="STRING" id="71421.HI_0017"/>
<dbReference type="EnsemblBacteria" id="AAC21695">
    <property type="protein sequence ID" value="AAC21695"/>
    <property type="gene ID" value="HI_0017"/>
</dbReference>
<dbReference type="KEGG" id="hin:HI_0017"/>
<dbReference type="PATRIC" id="fig|71421.8.peg.17"/>
<dbReference type="eggNOG" id="COG3445">
    <property type="taxonomic scope" value="Bacteria"/>
</dbReference>
<dbReference type="HOGENOM" id="CLU_133780_0_0_6"/>
<dbReference type="OrthoDB" id="9803969at2"/>
<dbReference type="PhylomeDB" id="P44455"/>
<dbReference type="BioCyc" id="HINF71421:G1GJ1-17-MONOMER"/>
<dbReference type="Proteomes" id="UP000000579">
    <property type="component" value="Chromosome"/>
</dbReference>
<dbReference type="GO" id="GO:0003824">
    <property type="term" value="F:catalytic activity"/>
    <property type="evidence" value="ECO:0007669"/>
    <property type="project" value="InterPro"/>
</dbReference>
<dbReference type="FunFam" id="3.20.70.20:FF:000002">
    <property type="entry name" value="Autonomous glycyl radical cofactor"/>
    <property type="match status" value="1"/>
</dbReference>
<dbReference type="Gene3D" id="3.20.70.20">
    <property type="match status" value="1"/>
</dbReference>
<dbReference type="HAMAP" id="MF_00806">
    <property type="entry name" value="GrcA"/>
    <property type="match status" value="1"/>
</dbReference>
<dbReference type="InterPro" id="IPR050244">
    <property type="entry name" value="Auton_GlycylRad_Cofactor"/>
</dbReference>
<dbReference type="InterPro" id="IPR019777">
    <property type="entry name" value="Form_AcTrfase_GR_CS"/>
</dbReference>
<dbReference type="InterPro" id="IPR001150">
    <property type="entry name" value="Gly_radical"/>
</dbReference>
<dbReference type="InterPro" id="IPR011140">
    <property type="entry name" value="Glycyl_radical_cofactor_GrcA"/>
</dbReference>
<dbReference type="NCBIfam" id="TIGR04365">
    <property type="entry name" value="spare_glycyl"/>
    <property type="match status" value="1"/>
</dbReference>
<dbReference type="PANTHER" id="PTHR30191">
    <property type="entry name" value="FORMATE ACETYLTRANSFERASE"/>
    <property type="match status" value="1"/>
</dbReference>
<dbReference type="PANTHER" id="PTHR30191:SF0">
    <property type="entry name" value="FORMATE ACETYLTRANSFERASE 1"/>
    <property type="match status" value="1"/>
</dbReference>
<dbReference type="Pfam" id="PF01228">
    <property type="entry name" value="Gly_radical"/>
    <property type="match status" value="1"/>
</dbReference>
<dbReference type="PIRSF" id="PIRSF000378">
    <property type="entry name" value="Gly_radicl_yfiD"/>
    <property type="match status" value="1"/>
</dbReference>
<dbReference type="SUPFAM" id="SSF51998">
    <property type="entry name" value="PFL-like glycyl radical enzymes"/>
    <property type="match status" value="1"/>
</dbReference>
<dbReference type="PROSITE" id="PS00850">
    <property type="entry name" value="GLY_RADICAL_1"/>
    <property type="match status" value="1"/>
</dbReference>
<dbReference type="PROSITE" id="PS51149">
    <property type="entry name" value="GLY_RADICAL_2"/>
    <property type="match status" value="1"/>
</dbReference>
<evidence type="ECO:0000255" key="1">
    <source>
        <dbReference type="HAMAP-Rule" id="MF_00806"/>
    </source>
</evidence>
<gene>
    <name evidence="1" type="primary">grcA</name>
    <name type="ordered locus">HI_0017</name>
</gene>
<accession>P44455</accession>
<feature type="chain" id="PRO_0000166702" description="Autonomous glycyl radical cofactor">
    <location>
        <begin position="1"/>
        <end position="127"/>
    </location>
</feature>
<feature type="domain" description="Glycine radical" evidence="1">
    <location>
        <begin position="5"/>
        <end position="127"/>
    </location>
</feature>
<feature type="modified residue" description="Glycine radical" evidence="1">
    <location>
        <position position="102"/>
    </location>
</feature>
<protein>
    <recommendedName>
        <fullName evidence="1">Autonomous glycyl radical cofactor</fullName>
    </recommendedName>
</protein>
<name>GRCA_HAEIN</name>
<proteinExistence type="evidence at protein level"/>
<comment type="function">
    <text evidence="1">Acts as a radical domain for damaged PFL and possibly other radical proteins.</text>
</comment>
<keyword id="KW-0556">Organic radical</keyword>
<keyword id="KW-1185">Reference proteome</keyword>
<reference key="1">
    <citation type="journal article" date="1995" name="Science">
        <title>Whole-genome random sequencing and assembly of Haemophilus influenzae Rd.</title>
        <authorList>
            <person name="Fleischmann R.D."/>
            <person name="Adams M.D."/>
            <person name="White O."/>
            <person name="Clayton R.A."/>
            <person name="Kirkness E.F."/>
            <person name="Kerlavage A.R."/>
            <person name="Bult C.J."/>
            <person name="Tomb J.-F."/>
            <person name="Dougherty B.A."/>
            <person name="Merrick J.M."/>
            <person name="McKenney K."/>
            <person name="Sutton G.G."/>
            <person name="FitzHugh W."/>
            <person name="Fields C.A."/>
            <person name="Gocayne J.D."/>
            <person name="Scott J.D."/>
            <person name="Shirley R."/>
            <person name="Liu L.-I."/>
            <person name="Glodek A."/>
            <person name="Kelley J.M."/>
            <person name="Weidman J.F."/>
            <person name="Phillips C.A."/>
            <person name="Spriggs T."/>
            <person name="Hedblom E."/>
            <person name="Cotton M.D."/>
            <person name="Utterback T.R."/>
            <person name="Hanna M.C."/>
            <person name="Nguyen D.T."/>
            <person name="Saudek D.M."/>
            <person name="Brandon R.C."/>
            <person name="Fine L.D."/>
            <person name="Fritchman J.L."/>
            <person name="Fuhrmann J.L."/>
            <person name="Geoghagen N.S.M."/>
            <person name="Gnehm C.L."/>
            <person name="McDonald L.A."/>
            <person name="Small K.V."/>
            <person name="Fraser C.M."/>
            <person name="Smith H.O."/>
            <person name="Venter J.C."/>
        </authorList>
    </citation>
    <scope>NUCLEOTIDE SEQUENCE [LARGE SCALE GENOMIC DNA]</scope>
    <source>
        <strain>ATCC 51907 / DSM 11121 / KW20 / Rd</strain>
    </source>
</reference>
<reference key="2">
    <citation type="journal article" date="1998" name="Electrophoresis">
        <title>Reference map of the low molecular mass proteins of Haemophilus influenzae.</title>
        <authorList>
            <person name="Fountoulakis M."/>
            <person name="Juranville J.-F."/>
            <person name="Roeder D."/>
            <person name="Evers S."/>
            <person name="Berndt P."/>
            <person name="Langen H."/>
        </authorList>
    </citation>
    <scope>IDENTIFICATION BY MASS SPECTROMETRY</scope>
    <source>
        <strain>ATCC 51907 / DSM 11121 / KW20 / Rd</strain>
    </source>
</reference>
<reference key="3">
    <citation type="journal article" date="2000" name="Electrophoresis">
        <title>Two-dimensional map of the proteome of Haemophilus influenzae.</title>
        <authorList>
            <person name="Langen H."/>
            <person name="Takacs B."/>
            <person name="Evers S."/>
            <person name="Berndt P."/>
            <person name="Lahm H.W."/>
            <person name="Wipf B."/>
            <person name="Gray C."/>
            <person name="Fountoulakis M."/>
        </authorList>
    </citation>
    <scope>IDENTIFICATION BY MASS SPECTROMETRY</scope>
    <source>
        <strain>ATCC 51907 / DSM 11121 / KW20 / Rd</strain>
    </source>
</reference>